<reference key="1">
    <citation type="journal article" date="2004" name="Nature">
        <title>Genome sequence of the Brown Norway rat yields insights into mammalian evolution.</title>
        <authorList>
            <person name="Gibbs R.A."/>
            <person name="Weinstock G.M."/>
            <person name="Metzker M.L."/>
            <person name="Muzny D.M."/>
            <person name="Sodergren E.J."/>
            <person name="Scherer S."/>
            <person name="Scott G."/>
            <person name="Steffen D."/>
            <person name="Worley K.C."/>
            <person name="Burch P.E."/>
            <person name="Okwuonu G."/>
            <person name="Hines S."/>
            <person name="Lewis L."/>
            <person name="Deramo C."/>
            <person name="Delgado O."/>
            <person name="Dugan-Rocha S."/>
            <person name="Miner G."/>
            <person name="Morgan M."/>
            <person name="Hawes A."/>
            <person name="Gill R."/>
            <person name="Holt R.A."/>
            <person name="Adams M.D."/>
            <person name="Amanatides P.G."/>
            <person name="Baden-Tillson H."/>
            <person name="Barnstead M."/>
            <person name="Chin S."/>
            <person name="Evans C.A."/>
            <person name="Ferriera S."/>
            <person name="Fosler C."/>
            <person name="Glodek A."/>
            <person name="Gu Z."/>
            <person name="Jennings D."/>
            <person name="Kraft C.L."/>
            <person name="Nguyen T."/>
            <person name="Pfannkoch C.M."/>
            <person name="Sitter C."/>
            <person name="Sutton G.G."/>
            <person name="Venter J.C."/>
            <person name="Woodage T."/>
            <person name="Smith D."/>
            <person name="Lee H.-M."/>
            <person name="Gustafson E."/>
            <person name="Cahill P."/>
            <person name="Kana A."/>
            <person name="Doucette-Stamm L."/>
            <person name="Weinstock K."/>
            <person name="Fechtel K."/>
            <person name="Weiss R.B."/>
            <person name="Dunn D.M."/>
            <person name="Green E.D."/>
            <person name="Blakesley R.W."/>
            <person name="Bouffard G.G."/>
            <person name="De Jong P.J."/>
            <person name="Osoegawa K."/>
            <person name="Zhu B."/>
            <person name="Marra M."/>
            <person name="Schein J."/>
            <person name="Bosdet I."/>
            <person name="Fjell C."/>
            <person name="Jones S."/>
            <person name="Krzywinski M."/>
            <person name="Mathewson C."/>
            <person name="Siddiqui A."/>
            <person name="Wye N."/>
            <person name="McPherson J."/>
            <person name="Zhao S."/>
            <person name="Fraser C.M."/>
            <person name="Shetty J."/>
            <person name="Shatsman S."/>
            <person name="Geer K."/>
            <person name="Chen Y."/>
            <person name="Abramzon S."/>
            <person name="Nierman W.C."/>
            <person name="Havlak P.H."/>
            <person name="Chen R."/>
            <person name="Durbin K.J."/>
            <person name="Egan A."/>
            <person name="Ren Y."/>
            <person name="Song X.-Z."/>
            <person name="Li B."/>
            <person name="Liu Y."/>
            <person name="Qin X."/>
            <person name="Cawley S."/>
            <person name="Cooney A.J."/>
            <person name="D'Souza L.M."/>
            <person name="Martin K."/>
            <person name="Wu J.Q."/>
            <person name="Gonzalez-Garay M.L."/>
            <person name="Jackson A.R."/>
            <person name="Kalafus K.J."/>
            <person name="McLeod M.P."/>
            <person name="Milosavljevic A."/>
            <person name="Virk D."/>
            <person name="Volkov A."/>
            <person name="Wheeler D.A."/>
            <person name="Zhang Z."/>
            <person name="Bailey J.A."/>
            <person name="Eichler E.E."/>
            <person name="Tuzun E."/>
            <person name="Birney E."/>
            <person name="Mongin E."/>
            <person name="Ureta-Vidal A."/>
            <person name="Woodwark C."/>
            <person name="Zdobnov E."/>
            <person name="Bork P."/>
            <person name="Suyama M."/>
            <person name="Torrents D."/>
            <person name="Alexandersson M."/>
            <person name="Trask B.J."/>
            <person name="Young J.M."/>
            <person name="Huang H."/>
            <person name="Wang H."/>
            <person name="Xing H."/>
            <person name="Daniels S."/>
            <person name="Gietzen D."/>
            <person name="Schmidt J."/>
            <person name="Stevens K."/>
            <person name="Vitt U."/>
            <person name="Wingrove J."/>
            <person name="Camara F."/>
            <person name="Mar Alba M."/>
            <person name="Abril J.F."/>
            <person name="Guigo R."/>
            <person name="Smit A."/>
            <person name="Dubchak I."/>
            <person name="Rubin E.M."/>
            <person name="Couronne O."/>
            <person name="Poliakov A."/>
            <person name="Huebner N."/>
            <person name="Ganten D."/>
            <person name="Goesele C."/>
            <person name="Hummel O."/>
            <person name="Kreitler T."/>
            <person name="Lee Y.-A."/>
            <person name="Monti J."/>
            <person name="Schulz H."/>
            <person name="Zimdahl H."/>
            <person name="Himmelbauer H."/>
            <person name="Lehrach H."/>
            <person name="Jacob H.J."/>
            <person name="Bromberg S."/>
            <person name="Gullings-Handley J."/>
            <person name="Jensen-Seaman M.I."/>
            <person name="Kwitek A.E."/>
            <person name="Lazar J."/>
            <person name="Pasko D."/>
            <person name="Tonellato P.J."/>
            <person name="Twigger S."/>
            <person name="Ponting C.P."/>
            <person name="Duarte J.M."/>
            <person name="Rice S."/>
            <person name="Goodstadt L."/>
            <person name="Beatson S.A."/>
            <person name="Emes R.D."/>
            <person name="Winter E.E."/>
            <person name="Webber C."/>
            <person name="Brandt P."/>
            <person name="Nyakatura G."/>
            <person name="Adetobi M."/>
            <person name="Chiaromonte F."/>
            <person name="Elnitski L."/>
            <person name="Eswara P."/>
            <person name="Hardison R.C."/>
            <person name="Hou M."/>
            <person name="Kolbe D."/>
            <person name="Makova K."/>
            <person name="Miller W."/>
            <person name="Nekrutenko A."/>
            <person name="Riemer C."/>
            <person name="Schwartz S."/>
            <person name="Taylor J."/>
            <person name="Yang S."/>
            <person name="Zhang Y."/>
            <person name="Lindpaintner K."/>
            <person name="Andrews T.D."/>
            <person name="Caccamo M."/>
            <person name="Clamp M."/>
            <person name="Clarke L."/>
            <person name="Curwen V."/>
            <person name="Durbin R.M."/>
            <person name="Eyras E."/>
            <person name="Searle S.M."/>
            <person name="Cooper G.M."/>
            <person name="Batzoglou S."/>
            <person name="Brudno M."/>
            <person name="Sidow A."/>
            <person name="Stone E.A."/>
            <person name="Payseur B.A."/>
            <person name="Bourque G."/>
            <person name="Lopez-Otin C."/>
            <person name="Puente X.S."/>
            <person name="Chakrabarti K."/>
            <person name="Chatterji S."/>
            <person name="Dewey C."/>
            <person name="Pachter L."/>
            <person name="Bray N."/>
            <person name="Yap V.B."/>
            <person name="Caspi A."/>
            <person name="Tesler G."/>
            <person name="Pevzner P.A."/>
            <person name="Haussler D."/>
            <person name="Roskin K.M."/>
            <person name="Baertsch R."/>
            <person name="Clawson H."/>
            <person name="Furey T.S."/>
            <person name="Hinrichs A.S."/>
            <person name="Karolchik D."/>
            <person name="Kent W.J."/>
            <person name="Rosenbloom K.R."/>
            <person name="Trumbower H."/>
            <person name="Weirauch M."/>
            <person name="Cooper D.N."/>
            <person name="Stenson P.D."/>
            <person name="Ma B."/>
            <person name="Brent M."/>
            <person name="Arumugam M."/>
            <person name="Shteynberg D."/>
            <person name="Copley R.R."/>
            <person name="Taylor M.S."/>
            <person name="Riethman H."/>
            <person name="Mudunuri U."/>
            <person name="Peterson J."/>
            <person name="Guyer M."/>
            <person name="Felsenfeld A."/>
            <person name="Old S."/>
            <person name="Mockrin S."/>
            <person name="Collins F.S."/>
        </authorList>
    </citation>
    <scope>NUCLEOTIDE SEQUENCE [LARGE SCALE GENOMIC DNA]</scope>
    <source>
        <strain>Brown Norway</strain>
    </source>
</reference>
<reference key="2">
    <citation type="journal article" date="2015" name="Cell Death Differ.">
        <title>Regulation of neuronal survival and morphology by the E3 ubiquitin ligase RNF157.</title>
        <authorList>
            <person name="Matz A."/>
            <person name="Lee S.J."/>
            <person name="Schwedhelm-Domeyer N."/>
            <person name="Zanini D."/>
            <person name="Holubowska A."/>
            <person name="Kannan M."/>
            <person name="Farnworth M."/>
            <person name="Jahn O."/>
            <person name="Goepfert M.C."/>
            <person name="Stegmueller J."/>
        </authorList>
    </citation>
    <scope>TISSUE SPECIFICITY</scope>
    <scope>SUBCELLULAR LOCATION</scope>
</reference>
<proteinExistence type="evidence at transcript level"/>
<protein>
    <recommendedName>
        <fullName evidence="6">E3 ubiquitin ligase Rnf157</fullName>
        <ecNumber evidence="5">2.3.2.27</ecNumber>
    </recommendedName>
    <alternativeName>
        <fullName evidence="6">RING finger protein 157</fullName>
    </alternativeName>
    <alternativeName>
        <fullName evidence="7">RING-type E3 ubiquitin transferase Rnf157</fullName>
    </alternativeName>
</protein>
<feature type="initiator methionine" description="Removed" evidence="2">
    <location>
        <position position="1"/>
    </location>
</feature>
<feature type="chain" id="PRO_0000442439" description="E3 ubiquitin ligase Rnf157">
    <location>
        <begin position="2"/>
        <end position="682"/>
    </location>
</feature>
<feature type="zinc finger region" description="RING-type; degenerate" evidence="3">
    <location>
        <begin position="277"/>
        <end position="317"/>
    </location>
</feature>
<feature type="region of interest" description="Disordered" evidence="4">
    <location>
        <begin position="440"/>
        <end position="604"/>
    </location>
</feature>
<feature type="region of interest" description="Disordered" evidence="4">
    <location>
        <begin position="655"/>
        <end position="682"/>
    </location>
</feature>
<feature type="short sequence motif" description="D-box 1" evidence="1">
    <location>
        <begin position="330"/>
        <end position="333"/>
    </location>
</feature>
<feature type="short sequence motif" description="D-box 2" evidence="1">
    <location>
        <begin position="658"/>
        <end position="661"/>
    </location>
</feature>
<feature type="compositionally biased region" description="Polar residues" evidence="4">
    <location>
        <begin position="479"/>
        <end position="538"/>
    </location>
</feature>
<feature type="compositionally biased region" description="Acidic residues" evidence="4">
    <location>
        <begin position="585"/>
        <end position="597"/>
    </location>
</feature>
<feature type="modified residue" description="Phosphoserine" evidence="1">
    <location>
        <position position="662"/>
    </location>
</feature>
<feature type="modified residue" description="Phosphoserine" evidence="1">
    <location>
        <position position="664"/>
    </location>
</feature>
<feature type="modified residue" description="Phosphoserine" evidence="1">
    <location>
        <position position="665"/>
    </location>
</feature>
<feature type="lipid moiety-binding region" description="N-myristoyl glycine" evidence="2">
    <location>
        <position position="2"/>
    </location>
</feature>
<accession>M0R5D6</accession>
<name>RN157_RAT</name>
<keyword id="KW-0963">Cytoplasm</keyword>
<keyword id="KW-0449">Lipoprotein</keyword>
<keyword id="KW-0479">Metal-binding</keyword>
<keyword id="KW-0519">Myristate</keyword>
<keyword id="KW-0597">Phosphoprotein</keyword>
<keyword id="KW-1185">Reference proteome</keyword>
<keyword id="KW-0808">Transferase</keyword>
<keyword id="KW-0833">Ubl conjugation pathway</keyword>
<keyword id="KW-0862">Zinc</keyword>
<keyword id="KW-0863">Zinc-finger</keyword>
<organism>
    <name type="scientific">Rattus norvegicus</name>
    <name type="common">Rat</name>
    <dbReference type="NCBI Taxonomy" id="10116"/>
    <lineage>
        <taxon>Eukaryota</taxon>
        <taxon>Metazoa</taxon>
        <taxon>Chordata</taxon>
        <taxon>Craniata</taxon>
        <taxon>Vertebrata</taxon>
        <taxon>Euteleostomi</taxon>
        <taxon>Mammalia</taxon>
        <taxon>Eutheria</taxon>
        <taxon>Euarchontoglires</taxon>
        <taxon>Glires</taxon>
        <taxon>Rodentia</taxon>
        <taxon>Myomorpha</taxon>
        <taxon>Muroidea</taxon>
        <taxon>Muridae</taxon>
        <taxon>Murinae</taxon>
        <taxon>Rattus</taxon>
    </lineage>
</organism>
<dbReference type="EC" id="2.3.2.27" evidence="5"/>
<dbReference type="EMBL" id="AABR07030824">
    <property type="status" value="NOT_ANNOTATED_CDS"/>
    <property type="molecule type" value="Genomic_DNA"/>
</dbReference>
<dbReference type="EMBL" id="AABR07030825">
    <property type="status" value="NOT_ANNOTATED_CDS"/>
    <property type="molecule type" value="Genomic_DNA"/>
</dbReference>
<dbReference type="EMBL" id="AABR07030826">
    <property type="status" value="NOT_ANNOTATED_CDS"/>
    <property type="molecule type" value="Genomic_DNA"/>
</dbReference>
<dbReference type="EMBL" id="AABR07030827">
    <property type="status" value="NOT_ANNOTATED_CDS"/>
    <property type="molecule type" value="Genomic_DNA"/>
</dbReference>
<dbReference type="EMBL" id="AABR07030828">
    <property type="status" value="NOT_ANNOTATED_CDS"/>
    <property type="molecule type" value="Genomic_DNA"/>
</dbReference>
<dbReference type="FunCoup" id="M0R5D6">
    <property type="interactions" value="1071"/>
</dbReference>
<dbReference type="STRING" id="10116.ENSRNOP00000064600"/>
<dbReference type="PhosphoSitePlus" id="M0R5D6"/>
<dbReference type="AGR" id="RGD:1591154"/>
<dbReference type="RGD" id="1591154">
    <property type="gene designation" value="Rnf157"/>
</dbReference>
<dbReference type="VEuPathDB" id="HostDB:ENSRNOG00000049862"/>
<dbReference type="HOGENOM" id="CLU_016631_2_0_1"/>
<dbReference type="InParanoid" id="M0R5D6"/>
<dbReference type="PRO" id="PR:M0R5D6"/>
<dbReference type="Proteomes" id="UP000002494">
    <property type="component" value="Chromosome 10"/>
</dbReference>
<dbReference type="Bgee" id="ENSRNOG00000049862">
    <property type="expression patterns" value="Expressed in frontal cortex and 17 other cell types or tissues"/>
</dbReference>
<dbReference type="ExpressionAtlas" id="M0R5D6">
    <property type="expression patterns" value="baseline and differential"/>
</dbReference>
<dbReference type="GO" id="GO:0044297">
    <property type="term" value="C:cell body"/>
    <property type="evidence" value="ECO:0000314"/>
    <property type="project" value="UniProtKB"/>
</dbReference>
<dbReference type="GO" id="GO:0005737">
    <property type="term" value="C:cytoplasm"/>
    <property type="evidence" value="ECO:0000314"/>
    <property type="project" value="UniProtKB"/>
</dbReference>
<dbReference type="GO" id="GO:0061630">
    <property type="term" value="F:ubiquitin protein ligase activity"/>
    <property type="evidence" value="ECO:0000314"/>
    <property type="project" value="UniProtKB"/>
</dbReference>
<dbReference type="GO" id="GO:0008270">
    <property type="term" value="F:zinc ion binding"/>
    <property type="evidence" value="ECO:0007669"/>
    <property type="project" value="UniProtKB-KW"/>
</dbReference>
<dbReference type="GO" id="GO:0043066">
    <property type="term" value="P:negative regulation of apoptotic process"/>
    <property type="evidence" value="ECO:0000315"/>
    <property type="project" value="UniProtKB"/>
</dbReference>
<dbReference type="GO" id="GO:1903861">
    <property type="term" value="P:positive regulation of dendrite extension"/>
    <property type="evidence" value="ECO:0000315"/>
    <property type="project" value="UniProtKB"/>
</dbReference>
<dbReference type="GO" id="GO:0016567">
    <property type="term" value="P:protein ubiquitination"/>
    <property type="evidence" value="ECO:0000314"/>
    <property type="project" value="UniProtKB"/>
</dbReference>
<dbReference type="FunFam" id="3.30.40.10:FF:000013">
    <property type="entry name" value="E3 ubiquitin-protein ligase MGRN1 isoform 1"/>
    <property type="match status" value="1"/>
</dbReference>
<dbReference type="Gene3D" id="3.30.40.10">
    <property type="entry name" value="Zinc/RING finger domain, C3HC4 (zinc finger)"/>
    <property type="match status" value="1"/>
</dbReference>
<dbReference type="InterPro" id="IPR045194">
    <property type="entry name" value="MGRN1/RNF157-like"/>
</dbReference>
<dbReference type="InterPro" id="IPR001841">
    <property type="entry name" value="Znf_RING"/>
</dbReference>
<dbReference type="InterPro" id="IPR013083">
    <property type="entry name" value="Znf_RING/FYVE/PHD"/>
</dbReference>
<dbReference type="PANTHER" id="PTHR22996:SF1">
    <property type="entry name" value="E3 UBIQUITIN LIGASE RNF157"/>
    <property type="match status" value="1"/>
</dbReference>
<dbReference type="PANTHER" id="PTHR22996">
    <property type="entry name" value="MAHOGUNIN"/>
    <property type="match status" value="1"/>
</dbReference>
<dbReference type="Pfam" id="PF13920">
    <property type="entry name" value="zf-C3HC4_3"/>
    <property type="match status" value="1"/>
</dbReference>
<dbReference type="SUPFAM" id="SSF57850">
    <property type="entry name" value="RING/U-box"/>
    <property type="match status" value="1"/>
</dbReference>
<dbReference type="PROSITE" id="PS50089">
    <property type="entry name" value="ZF_RING_2"/>
    <property type="match status" value="1"/>
</dbReference>
<comment type="function">
    <text evidence="1">E3 ubiquitin ligase that ubiquitinates APBB1 for its degradation by the proteasome and thus prevents apoptosis and promotes survival of neurons (By similarity). Has a dual role in neurons as it is also required for dendrite growth and maintenance for which its ligase activity is not critical (By similarity). May act as a scaffold molecule to regulate this process (By similarity). Acts as a downstream effector of the interconnected PI3K and MAPK signaling pathways and thus participates in the regulation of the cell cycle (By similarity).</text>
</comment>
<comment type="catalytic activity">
    <reaction evidence="1">
        <text>S-ubiquitinyl-[E2 ubiquitin-conjugating enzyme]-L-cysteine + [acceptor protein]-L-lysine = [E2 ubiquitin-conjugating enzyme]-L-cysteine + N(6)-ubiquitinyl-[acceptor protein]-L-lysine.</text>
        <dbReference type="EC" id="2.3.2.27"/>
    </reaction>
</comment>
<comment type="subunit">
    <text evidence="1">Interacts with APBB1 (By similarity). Interacts with CHD1; CHD1-binding controls RNF157 stability (By similarity). Also interacts with ATRN, MEGF8, TECR, MSI2, PLRG1, BYSL, MTERF3, PSMA1, MRPS18B, PRPF4, FASTKD2, SLC25A1, SMU1, CNOT9, MRPS2, MAGT1, FXR2, EMD, PSMD8, HDAC1, RAN, HSD17B12, TXNDC5 and MRPL19 (By similarity).</text>
</comment>
<comment type="subcellular location">
    <subcellularLocation>
        <location evidence="5">Cytoplasm</location>
    </subcellularLocation>
</comment>
<comment type="tissue specificity">
    <text evidence="5">Predominantly expressed in the brain (PubMed:25342469).</text>
</comment>
<comment type="domain">
    <text evidence="1">The D-box motifs play a key role in RNF157 stabilization.</text>
</comment>
<gene>
    <name type="primary">Rnf157</name>
</gene>
<sequence length="682" mass="74565">MGALTSRQHAGVEEVDIPSNSVYRYPPKSGSYFASHFIMGGEKFDCTHPEGYLFGENSDLNFLGNRPVSFPYAAPPPHEPVKTLRSLINIRKDTLRLVKCAEEVKSHGEEAGKAKVHYNVEFTFDTDARVAITIYYQATEEFQNGIASYIPKDNSLQSETVHYKRGVCQQFCLPSHTVDPSEWAEEELGFDLDREVYPLVVHAVVDEGDEYFGHCHVLLGTFEKHSDGTFCVKPLKQKQVWDGVTYLLQEDYGIENKSNTQDFKVAEDDVRDNSAECVVCLSDVRDTLILPCRHCASCNVHCADTLRYQANNCPICRLPFRALLQIRAMRKKLGPLSPSSFNPIISSQTSDSEEHSSSENIPAGYEVVSLLEALNGPLTSSPAVPPLHVLGDGHLSGMLPSYGSDGHLPPVRTLSPLDHLSDCNSQGLKLNKSLSKSISQNSSVLHEEEDERSCSESDTQLSQRLSAQHPEEGPDVTPESENLTLSSSGAVDQSSCTGTPLSSTISSPEDPASSSLAQSVMSMASSQISTDTVSSMSGSYIAPGTEEEGEAPPSPRAASRAPSEEEETPAESPDSNFAGLPAGEQDAEGNDIMEEEDRSPVQEDGQRTCAFLGMECDNNNDFDVASVKALDNKLCSEVCLPGTWQHDAAIINRHNTQRRRLSPSSLEDPEEDRPCVWDPLAV</sequence>
<evidence type="ECO:0000250" key="1">
    <source>
        <dbReference type="UniProtKB" id="Q96PX1"/>
    </source>
</evidence>
<evidence type="ECO:0000255" key="2"/>
<evidence type="ECO:0000255" key="3">
    <source>
        <dbReference type="PROSITE-ProRule" id="PRU00175"/>
    </source>
</evidence>
<evidence type="ECO:0000256" key="4">
    <source>
        <dbReference type="SAM" id="MobiDB-lite"/>
    </source>
</evidence>
<evidence type="ECO:0000269" key="5">
    <source>
    </source>
</evidence>
<evidence type="ECO:0000303" key="6">
    <source>
    </source>
</evidence>
<evidence type="ECO:0000305" key="7"/>